<name>HSP70_EMENI</name>
<dbReference type="EMBL" id="AACD01000088">
    <property type="protein sequence ID" value="EAA62310.1"/>
    <property type="molecule type" value="Genomic_DNA"/>
</dbReference>
<dbReference type="EMBL" id="BN001305">
    <property type="protein sequence ID" value="CBF80914.1"/>
    <property type="molecule type" value="Genomic_DNA"/>
</dbReference>
<dbReference type="RefSeq" id="XP_662733.1">
    <property type="nucleotide sequence ID" value="XM_657641.1"/>
</dbReference>
<dbReference type="SMR" id="Q5B2V1"/>
<dbReference type="FunCoup" id="Q5B2V1">
    <property type="interactions" value="1835"/>
</dbReference>
<dbReference type="STRING" id="227321.Q5B2V1"/>
<dbReference type="EnsemblFungi" id="CBF80914">
    <property type="protein sequence ID" value="CBF80914"/>
    <property type="gene ID" value="ANIA_05129"/>
</dbReference>
<dbReference type="KEGG" id="ani:ANIA_05129"/>
<dbReference type="VEuPathDB" id="FungiDB:AN5129"/>
<dbReference type="eggNOG" id="KOG0101">
    <property type="taxonomic scope" value="Eukaryota"/>
</dbReference>
<dbReference type="HOGENOM" id="CLU_005965_3_0_1"/>
<dbReference type="InParanoid" id="Q5B2V1"/>
<dbReference type="OMA" id="AYTKNQD"/>
<dbReference type="OrthoDB" id="2401965at2759"/>
<dbReference type="Proteomes" id="UP000000560">
    <property type="component" value="Chromosome V"/>
</dbReference>
<dbReference type="GO" id="GO:0005737">
    <property type="term" value="C:cytoplasm"/>
    <property type="evidence" value="ECO:0000318"/>
    <property type="project" value="GO_Central"/>
</dbReference>
<dbReference type="GO" id="GO:0005829">
    <property type="term" value="C:cytosol"/>
    <property type="evidence" value="ECO:0000318"/>
    <property type="project" value="GO_Central"/>
</dbReference>
<dbReference type="GO" id="GO:0005576">
    <property type="term" value="C:extracellular region"/>
    <property type="evidence" value="ECO:0000314"/>
    <property type="project" value="AspGD"/>
</dbReference>
<dbReference type="GO" id="GO:0005634">
    <property type="term" value="C:nucleus"/>
    <property type="evidence" value="ECO:0000318"/>
    <property type="project" value="GO_Central"/>
</dbReference>
<dbReference type="GO" id="GO:0005886">
    <property type="term" value="C:plasma membrane"/>
    <property type="evidence" value="ECO:0000318"/>
    <property type="project" value="GO_Central"/>
</dbReference>
<dbReference type="GO" id="GO:0005524">
    <property type="term" value="F:ATP binding"/>
    <property type="evidence" value="ECO:0007669"/>
    <property type="project" value="UniProtKB-KW"/>
</dbReference>
<dbReference type="GO" id="GO:0016887">
    <property type="term" value="F:ATP hydrolysis activity"/>
    <property type="evidence" value="ECO:0000318"/>
    <property type="project" value="GO_Central"/>
</dbReference>
<dbReference type="GO" id="GO:0140662">
    <property type="term" value="F:ATP-dependent protein folding chaperone"/>
    <property type="evidence" value="ECO:0007669"/>
    <property type="project" value="InterPro"/>
</dbReference>
<dbReference type="GO" id="GO:0031072">
    <property type="term" value="F:heat shock protein binding"/>
    <property type="evidence" value="ECO:0000318"/>
    <property type="project" value="GO_Central"/>
</dbReference>
<dbReference type="GO" id="GO:0044183">
    <property type="term" value="F:protein folding chaperone"/>
    <property type="evidence" value="ECO:0000318"/>
    <property type="project" value="GO_Central"/>
</dbReference>
<dbReference type="GO" id="GO:0097308">
    <property type="term" value="P:cellular response to farnesol"/>
    <property type="evidence" value="ECO:0000270"/>
    <property type="project" value="AspGD"/>
</dbReference>
<dbReference type="GO" id="GO:0071470">
    <property type="term" value="P:cellular response to osmotic stress"/>
    <property type="evidence" value="ECO:0000270"/>
    <property type="project" value="AspGD"/>
</dbReference>
<dbReference type="GO" id="GO:0051085">
    <property type="term" value="P:chaperone cofactor-dependent protein refolding"/>
    <property type="evidence" value="ECO:0000318"/>
    <property type="project" value="GO_Central"/>
</dbReference>
<dbReference type="GO" id="GO:0042026">
    <property type="term" value="P:protein refolding"/>
    <property type="evidence" value="ECO:0000318"/>
    <property type="project" value="GO_Central"/>
</dbReference>
<dbReference type="CDD" id="cd10233">
    <property type="entry name" value="ASKHA_NBD_HSP70_HSPA1"/>
    <property type="match status" value="1"/>
</dbReference>
<dbReference type="FunFam" id="2.60.34.10:FF:000002">
    <property type="entry name" value="Heat shock 70 kDa"/>
    <property type="match status" value="1"/>
</dbReference>
<dbReference type="FunFam" id="3.90.640.10:FF:000002">
    <property type="entry name" value="Heat shock 70 kDa"/>
    <property type="match status" value="1"/>
</dbReference>
<dbReference type="FunFam" id="3.30.420.40:FF:000172">
    <property type="entry name" value="Heat shock 70 kDa protein"/>
    <property type="match status" value="1"/>
</dbReference>
<dbReference type="FunFam" id="3.30.30.30:FF:000001">
    <property type="entry name" value="heat shock 70 kDa protein-like"/>
    <property type="match status" value="1"/>
</dbReference>
<dbReference type="FunFam" id="3.30.420.40:FF:000028">
    <property type="entry name" value="heat shock 70 kDa protein-like"/>
    <property type="match status" value="1"/>
</dbReference>
<dbReference type="FunFam" id="1.20.1270.10:FF:000016">
    <property type="entry name" value="Heat shock protein 70"/>
    <property type="match status" value="1"/>
</dbReference>
<dbReference type="FunFam" id="3.30.420.40:FF:000026">
    <property type="entry name" value="Heat shock protein 70"/>
    <property type="match status" value="1"/>
</dbReference>
<dbReference type="Gene3D" id="1.20.1270.10">
    <property type="match status" value="1"/>
</dbReference>
<dbReference type="Gene3D" id="3.30.30.30">
    <property type="match status" value="1"/>
</dbReference>
<dbReference type="Gene3D" id="3.30.420.40">
    <property type="match status" value="2"/>
</dbReference>
<dbReference type="Gene3D" id="3.90.640.10">
    <property type="entry name" value="Actin, Chain A, domain 4"/>
    <property type="match status" value="1"/>
</dbReference>
<dbReference type="Gene3D" id="2.60.34.10">
    <property type="entry name" value="Substrate Binding Domain Of DNAk, Chain A, domain 1"/>
    <property type="match status" value="1"/>
</dbReference>
<dbReference type="InterPro" id="IPR043129">
    <property type="entry name" value="ATPase_NBD"/>
</dbReference>
<dbReference type="InterPro" id="IPR018181">
    <property type="entry name" value="Heat_shock_70_CS"/>
</dbReference>
<dbReference type="InterPro" id="IPR029048">
    <property type="entry name" value="HSP70_C_sf"/>
</dbReference>
<dbReference type="InterPro" id="IPR029047">
    <property type="entry name" value="HSP70_peptide-bd_sf"/>
</dbReference>
<dbReference type="InterPro" id="IPR013126">
    <property type="entry name" value="Hsp_70_fam"/>
</dbReference>
<dbReference type="NCBIfam" id="NF001413">
    <property type="entry name" value="PRK00290.1"/>
    <property type="match status" value="1"/>
</dbReference>
<dbReference type="PANTHER" id="PTHR19375">
    <property type="entry name" value="HEAT SHOCK PROTEIN 70KDA"/>
    <property type="match status" value="1"/>
</dbReference>
<dbReference type="Pfam" id="PF00012">
    <property type="entry name" value="HSP70"/>
    <property type="match status" value="1"/>
</dbReference>
<dbReference type="PRINTS" id="PR00301">
    <property type="entry name" value="HEATSHOCK70"/>
</dbReference>
<dbReference type="SUPFAM" id="SSF53067">
    <property type="entry name" value="Actin-like ATPase domain"/>
    <property type="match status" value="2"/>
</dbReference>
<dbReference type="SUPFAM" id="SSF100934">
    <property type="entry name" value="Heat shock protein 70kD (HSP70), C-terminal subdomain"/>
    <property type="match status" value="1"/>
</dbReference>
<dbReference type="SUPFAM" id="SSF100920">
    <property type="entry name" value="Heat shock protein 70kD (HSP70), peptide-binding domain"/>
    <property type="match status" value="1"/>
</dbReference>
<dbReference type="PROSITE" id="PS00297">
    <property type="entry name" value="HSP70_1"/>
    <property type="match status" value="1"/>
</dbReference>
<dbReference type="PROSITE" id="PS00329">
    <property type="entry name" value="HSP70_2"/>
    <property type="match status" value="1"/>
</dbReference>
<dbReference type="PROSITE" id="PS01036">
    <property type="entry name" value="HSP70_3"/>
    <property type="match status" value="1"/>
</dbReference>
<proteinExistence type="evidence at protein level"/>
<protein>
    <recommendedName>
        <fullName>Heat shock 70 kDa protein</fullName>
    </recommendedName>
    <alternativeName>
        <fullName>HSP70</fullName>
    </alternativeName>
</protein>
<comment type="function">
    <text>Involved in osmoadaptation.</text>
</comment>
<comment type="induction">
    <text evidence="3">Up-regulated when grown with elevated levels of potassium chloride.</text>
</comment>
<comment type="similarity">
    <text evidence="4">Belongs to the heat shock protein 70 family.</text>
</comment>
<gene>
    <name type="primary">hsp70</name>
    <name type="ORF">AN5129</name>
</gene>
<accession>Q5B2V1</accession>
<accession>C8VEZ1</accession>
<reference key="1">
    <citation type="journal article" date="2005" name="Nature">
        <title>Sequencing of Aspergillus nidulans and comparative analysis with A. fumigatus and A. oryzae.</title>
        <authorList>
            <person name="Galagan J.E."/>
            <person name="Calvo S.E."/>
            <person name="Cuomo C."/>
            <person name="Ma L.-J."/>
            <person name="Wortman J.R."/>
            <person name="Batzoglou S."/>
            <person name="Lee S.-I."/>
            <person name="Bastuerkmen M."/>
            <person name="Spevak C.C."/>
            <person name="Clutterbuck J."/>
            <person name="Kapitonov V."/>
            <person name="Jurka J."/>
            <person name="Scazzocchio C."/>
            <person name="Farman M.L."/>
            <person name="Butler J."/>
            <person name="Purcell S."/>
            <person name="Harris S."/>
            <person name="Braus G.H."/>
            <person name="Draht O."/>
            <person name="Busch S."/>
            <person name="D'Enfert C."/>
            <person name="Bouchier C."/>
            <person name="Goldman G.H."/>
            <person name="Bell-Pedersen D."/>
            <person name="Griffiths-Jones S."/>
            <person name="Doonan J.H."/>
            <person name="Yu J."/>
            <person name="Vienken K."/>
            <person name="Pain A."/>
            <person name="Freitag M."/>
            <person name="Selker E.U."/>
            <person name="Archer D.B."/>
            <person name="Penalva M.A."/>
            <person name="Oakley B.R."/>
            <person name="Momany M."/>
            <person name="Tanaka T."/>
            <person name="Kumagai T."/>
            <person name="Asai K."/>
            <person name="Machida M."/>
            <person name="Nierman W.C."/>
            <person name="Denning D.W."/>
            <person name="Caddick M.X."/>
            <person name="Hynes M."/>
            <person name="Paoletti M."/>
            <person name="Fischer R."/>
            <person name="Miller B.L."/>
            <person name="Dyer P.S."/>
            <person name="Sachs M.S."/>
            <person name="Osmani S.A."/>
            <person name="Birren B.W."/>
        </authorList>
    </citation>
    <scope>NUCLEOTIDE SEQUENCE [LARGE SCALE GENOMIC DNA]</scope>
    <source>
        <strain>FGSC A4 / ATCC 38163 / CBS 112.46 / NRRL 194 / M139</strain>
    </source>
</reference>
<reference key="2">
    <citation type="journal article" date="2009" name="Fungal Genet. Biol.">
        <title>The 2008 update of the Aspergillus nidulans genome annotation: a community effort.</title>
        <authorList>
            <person name="Wortman J.R."/>
            <person name="Gilsenan J.M."/>
            <person name="Joardar V."/>
            <person name="Deegan J."/>
            <person name="Clutterbuck J."/>
            <person name="Andersen M.R."/>
            <person name="Archer D."/>
            <person name="Bencina M."/>
            <person name="Braus G."/>
            <person name="Coutinho P."/>
            <person name="von Dohren H."/>
            <person name="Doonan J."/>
            <person name="Driessen A.J."/>
            <person name="Durek P."/>
            <person name="Espeso E."/>
            <person name="Fekete E."/>
            <person name="Flipphi M."/>
            <person name="Estrada C.G."/>
            <person name="Geysens S."/>
            <person name="Goldman G."/>
            <person name="de Groot P.W."/>
            <person name="Hansen K."/>
            <person name="Harris S.D."/>
            <person name="Heinekamp T."/>
            <person name="Helmstaedt K."/>
            <person name="Henrissat B."/>
            <person name="Hofmann G."/>
            <person name="Homan T."/>
            <person name="Horio T."/>
            <person name="Horiuchi H."/>
            <person name="James S."/>
            <person name="Jones M."/>
            <person name="Karaffa L."/>
            <person name="Karanyi Z."/>
            <person name="Kato M."/>
            <person name="Keller N."/>
            <person name="Kelly D.E."/>
            <person name="Kiel J.A."/>
            <person name="Kim J.M."/>
            <person name="van der Klei I.J."/>
            <person name="Klis F.M."/>
            <person name="Kovalchuk A."/>
            <person name="Krasevec N."/>
            <person name="Kubicek C.P."/>
            <person name="Liu B."/>
            <person name="Maccabe A."/>
            <person name="Meyer V."/>
            <person name="Mirabito P."/>
            <person name="Miskei M."/>
            <person name="Mos M."/>
            <person name="Mullins J."/>
            <person name="Nelson D.R."/>
            <person name="Nielsen J."/>
            <person name="Oakley B.R."/>
            <person name="Osmani S.A."/>
            <person name="Pakula T."/>
            <person name="Paszewski A."/>
            <person name="Paulsen I."/>
            <person name="Pilsyk S."/>
            <person name="Pocsi I."/>
            <person name="Punt P.J."/>
            <person name="Ram A.F."/>
            <person name="Ren Q."/>
            <person name="Robellet X."/>
            <person name="Robson G."/>
            <person name="Seiboth B."/>
            <person name="van Solingen P."/>
            <person name="Specht T."/>
            <person name="Sun J."/>
            <person name="Taheri-Talesh N."/>
            <person name="Takeshita N."/>
            <person name="Ussery D."/>
            <person name="vanKuyk P.A."/>
            <person name="Visser H."/>
            <person name="van de Vondervoort P.J."/>
            <person name="de Vries R.P."/>
            <person name="Walton J."/>
            <person name="Xiang X."/>
            <person name="Xiong Y."/>
            <person name="Zeng A.P."/>
            <person name="Brandt B.W."/>
            <person name="Cornell M.J."/>
            <person name="van den Hondel C.A."/>
            <person name="Visser J."/>
            <person name="Oliver S.G."/>
            <person name="Turner G."/>
        </authorList>
    </citation>
    <scope>GENOME REANNOTATION</scope>
    <source>
        <strain>FGSC A4 / ATCC 38163 / CBS 112.46 / NRRL 194 / M139</strain>
    </source>
</reference>
<reference key="3">
    <citation type="journal article" date="2007" name="Fungal Genet. Biol.">
        <title>Proteome map of Aspergillus nidulans during osmoadaptation.</title>
        <authorList>
            <person name="Kim Y."/>
            <person name="Nandakumar M.P."/>
            <person name="Marten M.R."/>
        </authorList>
    </citation>
    <scope>INDUCTION</scope>
    <scope>IDENTIFICATION BY MASS SPECTROMETRY</scope>
</reference>
<evidence type="ECO:0000255" key="1"/>
<evidence type="ECO:0000256" key="2">
    <source>
        <dbReference type="SAM" id="MobiDB-lite"/>
    </source>
</evidence>
<evidence type="ECO:0000269" key="3">
    <source>
    </source>
</evidence>
<evidence type="ECO:0000305" key="4"/>
<organism>
    <name type="scientific">Emericella nidulans (strain FGSC A4 / ATCC 38163 / CBS 112.46 / NRRL 194 / M139)</name>
    <name type="common">Aspergillus nidulans</name>
    <dbReference type="NCBI Taxonomy" id="227321"/>
    <lineage>
        <taxon>Eukaryota</taxon>
        <taxon>Fungi</taxon>
        <taxon>Dikarya</taxon>
        <taxon>Ascomycota</taxon>
        <taxon>Pezizomycotina</taxon>
        <taxon>Eurotiomycetes</taxon>
        <taxon>Eurotiomycetidae</taxon>
        <taxon>Eurotiales</taxon>
        <taxon>Aspergillaceae</taxon>
        <taxon>Aspergillus</taxon>
        <taxon>Aspergillus subgen. Nidulantes</taxon>
    </lineage>
</organism>
<sequence length="644" mass="69917">MAPAVGIDLGTTYSCVGVFRDDRIDIIANDQGNRTTPSFVAFTDTERLIGDAAKNQVAMNPHNTVFDAKRLIGRRFGDAEVQADMKHWPFKVVDKSGKPIIEVEFKGETKQFTPEEISSMVLTKMRETAEAFLGGTVNNAVITVPAYFNDSQRQATKDAGLIAGLNVLRIINEPTAAAIAYGLDKKVEGERNVLIFDLGGGTFDVSLLTIEEGIFEVKATAGDTHLGGEDFDNRLVNHFVTEFKRKHKKDLSTNARALRRLRTACERAKRTLSSAAQTSIEIDSLFEGIDFYTSITRARFEELCQDLFRGTMEPVERVLRDAKIDKSSVHEIVLVGGSTRIPKIQRLVSDYFNKEANKSINPDEAVAYGAAVQAAILSGDTSSKSTNEILLLDVAPLSVGIETAGGVMTPLVKRNTTIPTKKSETFSTYSDNQPGVLIQVYEGERARTKDNNLLGKFELTGIPPAPRGVPQIEVTFDLDANGIMNVSAVEKGTGKTNKITITNDKGRLSKEDIERMLADAEKYKAEDEAEAARIQAKNGLESYAYSLKNTISEGQLQISEDDKKKVSDKIDEVISWLDNNQTAEKDEYESQQKELEGVANPIISAAYAAAGGAPGGAAPGAGAAPGGGAGFRNDGVVEENEELD</sequence>
<feature type="chain" id="PRO_0000348280" description="Heat shock 70 kDa protein">
    <location>
        <begin position="1"/>
        <end position="644"/>
    </location>
</feature>
<feature type="region of interest" description="Disordered" evidence="2">
    <location>
        <begin position="610"/>
        <end position="644"/>
    </location>
</feature>
<feature type="coiled-coil region" evidence="1">
    <location>
        <begin position="510"/>
        <end position="600"/>
    </location>
</feature>
<feature type="compositionally biased region" description="Gly residues" evidence="2">
    <location>
        <begin position="612"/>
        <end position="630"/>
    </location>
</feature>
<keyword id="KW-0067">ATP-binding</keyword>
<keyword id="KW-0175">Coiled coil</keyword>
<keyword id="KW-0547">Nucleotide-binding</keyword>
<keyword id="KW-1185">Reference proteome</keyword>
<keyword id="KW-0346">Stress response</keyword>